<evidence type="ECO:0000255" key="1">
    <source>
        <dbReference type="PROSITE-ProRule" id="PRU00176"/>
    </source>
</evidence>
<evidence type="ECO:0000256" key="2">
    <source>
        <dbReference type="SAM" id="MobiDB-lite"/>
    </source>
</evidence>
<evidence type="ECO:0000269" key="3">
    <source>
    </source>
</evidence>
<evidence type="ECO:0000269" key="4">
    <source>
    </source>
</evidence>
<evidence type="ECO:0000303" key="5">
    <source>
    </source>
</evidence>
<evidence type="ECO:0000305" key="6"/>
<evidence type="ECO:0000312" key="7">
    <source>
        <dbReference type="EMBL" id="BAA01645.1"/>
    </source>
</evidence>
<evidence type="ECO:0000312" key="8">
    <source>
        <dbReference type="WormBase" id="F42A6.7a"/>
    </source>
</evidence>
<dbReference type="EMBL" id="D10877">
    <property type="protein sequence ID" value="BAA01645.1"/>
    <property type="molecule type" value="mRNA"/>
</dbReference>
<dbReference type="EMBL" id="FO081370">
    <property type="protein sequence ID" value="CCD71134.1"/>
    <property type="molecule type" value="Genomic_DNA"/>
</dbReference>
<dbReference type="EMBL" id="FO081370">
    <property type="protein sequence ID" value="CCD71135.1"/>
    <property type="molecule type" value="Genomic_DNA"/>
</dbReference>
<dbReference type="EMBL" id="FO081370">
    <property type="protein sequence ID" value="CCD71136.1"/>
    <property type="molecule type" value="Genomic_DNA"/>
</dbReference>
<dbReference type="EMBL" id="FO081370">
    <property type="protein sequence ID" value="CCD71137.1"/>
    <property type="molecule type" value="Genomic_DNA"/>
</dbReference>
<dbReference type="PIR" id="S35500">
    <property type="entry name" value="S35500"/>
</dbReference>
<dbReference type="RefSeq" id="NP_001023199.1">
    <property type="nucleotide sequence ID" value="NM_001028028.3"/>
</dbReference>
<dbReference type="RefSeq" id="NP_001040944.1">
    <property type="nucleotide sequence ID" value="NM_001047479.3"/>
</dbReference>
<dbReference type="RefSeq" id="NP_001040945.1">
    <molecule id="Q22037-4"/>
    <property type="nucleotide sequence ID" value="NM_001047480.3"/>
</dbReference>
<dbReference type="RefSeq" id="NP_500326.2">
    <property type="nucleotide sequence ID" value="NM_067925.8"/>
</dbReference>
<dbReference type="SMR" id="Q22037"/>
<dbReference type="BioGRID" id="42241">
    <property type="interactions" value="9"/>
</dbReference>
<dbReference type="FunCoup" id="Q22037">
    <property type="interactions" value="2462"/>
</dbReference>
<dbReference type="IntAct" id="Q22037">
    <property type="interactions" value="1"/>
</dbReference>
<dbReference type="STRING" id="6239.F42A6.7d.2"/>
<dbReference type="iPTMnet" id="Q22037"/>
<dbReference type="PaxDb" id="6239-F42A6.7d.1"/>
<dbReference type="PeptideAtlas" id="Q22037"/>
<dbReference type="EnsemblMetazoa" id="F42A6.7a.1">
    <molecule id="Q22037-1"/>
    <property type="protein sequence ID" value="F42A6.7a.1"/>
    <property type="gene ID" value="WBGene00001999"/>
</dbReference>
<dbReference type="EnsemblMetazoa" id="F42A6.7a.2">
    <molecule id="Q22037-1"/>
    <property type="protein sequence ID" value="F42A6.7a.2"/>
    <property type="gene ID" value="WBGene00001999"/>
</dbReference>
<dbReference type="EnsemblMetazoa" id="F42A6.7b.1">
    <molecule id="Q22037-2"/>
    <property type="protein sequence ID" value="F42A6.7b.1"/>
    <property type="gene ID" value="WBGene00001999"/>
</dbReference>
<dbReference type="EnsemblMetazoa" id="F42A6.7b.2">
    <molecule id="Q22037-2"/>
    <property type="protein sequence ID" value="F42A6.7b.2"/>
    <property type="gene ID" value="WBGene00001999"/>
</dbReference>
<dbReference type="EnsemblMetazoa" id="F42A6.7b.3">
    <molecule id="Q22037-2"/>
    <property type="protein sequence ID" value="F42A6.7b.3"/>
    <property type="gene ID" value="WBGene00001999"/>
</dbReference>
<dbReference type="EnsemblMetazoa" id="F42A6.7b.4">
    <molecule id="Q22037-2"/>
    <property type="protein sequence ID" value="F42A6.7b.4"/>
    <property type="gene ID" value="WBGene00001999"/>
</dbReference>
<dbReference type="EnsemblMetazoa" id="F42A6.7c.1">
    <molecule id="Q22037-3"/>
    <property type="protein sequence ID" value="F42A6.7c.1"/>
    <property type="gene ID" value="WBGene00001999"/>
</dbReference>
<dbReference type="EnsemblMetazoa" id="F42A6.7c.2">
    <molecule id="Q22037-3"/>
    <property type="protein sequence ID" value="F42A6.7c.2"/>
    <property type="gene ID" value="WBGene00001999"/>
</dbReference>
<dbReference type="EnsemblMetazoa" id="F42A6.7d.1">
    <molecule id="Q22037-4"/>
    <property type="protein sequence ID" value="F42A6.7d.1"/>
    <property type="gene ID" value="WBGene00001999"/>
</dbReference>
<dbReference type="EnsemblMetazoa" id="F42A6.7d.2">
    <molecule id="Q22037-4"/>
    <property type="protein sequence ID" value="F42A6.7d.2"/>
    <property type="gene ID" value="WBGene00001999"/>
</dbReference>
<dbReference type="KEGG" id="cel:CELE_F42A6.7"/>
<dbReference type="UCSC" id="F42A6.7a.1">
    <property type="organism name" value="c. elegans"/>
</dbReference>
<dbReference type="AGR" id="WB:WBGene00001999"/>
<dbReference type="CTD" id="177101"/>
<dbReference type="WormBase" id="F42A6.7a">
    <molecule id="Q22037-1"/>
    <property type="protein sequence ID" value="CE17059"/>
    <property type="gene ID" value="WBGene00001999"/>
    <property type="gene designation" value="hrpa-1"/>
</dbReference>
<dbReference type="WormBase" id="F42A6.7b">
    <molecule id="Q22037-2"/>
    <property type="protein sequence ID" value="CE31510"/>
    <property type="gene ID" value="WBGene00001999"/>
    <property type="gene designation" value="hrpa-1"/>
</dbReference>
<dbReference type="WormBase" id="F42A6.7c">
    <molecule id="Q22037-3"/>
    <property type="protein sequence ID" value="CE29317"/>
    <property type="gene ID" value="WBGene00001999"/>
    <property type="gene designation" value="hrpa-1"/>
</dbReference>
<dbReference type="WormBase" id="F42A6.7d">
    <molecule id="Q22037-4"/>
    <property type="protein sequence ID" value="CE39251"/>
    <property type="gene ID" value="WBGene00001999"/>
    <property type="gene designation" value="hrpa-1"/>
</dbReference>
<dbReference type="eggNOG" id="KOG0118">
    <property type="taxonomic scope" value="Eukaryota"/>
</dbReference>
<dbReference type="GeneTree" id="ENSGT00940000156757"/>
<dbReference type="InParanoid" id="Q22037"/>
<dbReference type="OMA" id="PRVMESQ"/>
<dbReference type="OrthoDB" id="1875751at2759"/>
<dbReference type="PhylomeDB" id="Q22037"/>
<dbReference type="Reactome" id="R-CEL-6803529">
    <property type="pathway name" value="FGFR2 alternative splicing"/>
</dbReference>
<dbReference type="Reactome" id="R-CEL-72163">
    <property type="pathway name" value="mRNA Splicing - Major Pathway"/>
</dbReference>
<dbReference type="Reactome" id="R-CEL-72203">
    <property type="pathway name" value="Processing of Capped Intron-Containing Pre-mRNA"/>
</dbReference>
<dbReference type="PRO" id="PR:Q22037"/>
<dbReference type="Proteomes" id="UP000001940">
    <property type="component" value="Chromosome IV"/>
</dbReference>
<dbReference type="Bgee" id="WBGene00001999">
    <property type="expression patterns" value="Expressed in embryo and 4 other cell types or tissues"/>
</dbReference>
<dbReference type="GO" id="GO:0071013">
    <property type="term" value="C:catalytic step 2 spliceosome"/>
    <property type="evidence" value="ECO:0000318"/>
    <property type="project" value="GO_Central"/>
</dbReference>
<dbReference type="GO" id="GO:0000781">
    <property type="term" value="C:chromosome, telomeric region"/>
    <property type="evidence" value="ECO:0000314"/>
    <property type="project" value="WormBase"/>
</dbReference>
<dbReference type="GO" id="GO:0003723">
    <property type="term" value="F:RNA binding"/>
    <property type="evidence" value="ECO:0000250"/>
    <property type="project" value="WormBase"/>
</dbReference>
<dbReference type="GO" id="GO:0031581">
    <property type="term" value="P:hemidesmosome assembly"/>
    <property type="evidence" value="ECO:0000316"/>
    <property type="project" value="WormBase"/>
</dbReference>
<dbReference type="GO" id="GO:0000398">
    <property type="term" value="P:mRNA splicing, via spliceosome"/>
    <property type="evidence" value="ECO:0000250"/>
    <property type="project" value="WormBase"/>
</dbReference>
<dbReference type="CDD" id="cd12328">
    <property type="entry name" value="RRM2_hnRNPA_like"/>
    <property type="match status" value="1"/>
</dbReference>
<dbReference type="FunFam" id="3.30.70.330:FF:000860">
    <property type="entry name" value="Heterogeneous nuclear ribonucleoprotein A1"/>
    <property type="match status" value="1"/>
</dbReference>
<dbReference type="FunFam" id="3.30.70.330:FF:000040">
    <property type="entry name" value="Heterogeneous nuclear ribonucleoprotein A2/B1"/>
    <property type="match status" value="1"/>
</dbReference>
<dbReference type="Gene3D" id="3.30.70.330">
    <property type="match status" value="2"/>
</dbReference>
<dbReference type="InterPro" id="IPR012677">
    <property type="entry name" value="Nucleotide-bd_a/b_plait_sf"/>
</dbReference>
<dbReference type="InterPro" id="IPR035979">
    <property type="entry name" value="RBD_domain_sf"/>
</dbReference>
<dbReference type="InterPro" id="IPR000504">
    <property type="entry name" value="RRM_dom"/>
</dbReference>
<dbReference type="PANTHER" id="PTHR48026:SF14">
    <property type="entry name" value="HETEROGENEOUS NUCLEAR RIBONUCLEOPROTEIN A1"/>
    <property type="match status" value="1"/>
</dbReference>
<dbReference type="PANTHER" id="PTHR48026">
    <property type="entry name" value="HOMOLOGOUS TO DROSOPHILA SQD (SQUID) PROTEIN"/>
    <property type="match status" value="1"/>
</dbReference>
<dbReference type="Pfam" id="PF00076">
    <property type="entry name" value="RRM_1"/>
    <property type="match status" value="2"/>
</dbReference>
<dbReference type="SMART" id="SM00360">
    <property type="entry name" value="RRM"/>
    <property type="match status" value="2"/>
</dbReference>
<dbReference type="SUPFAM" id="SSF54928">
    <property type="entry name" value="RNA-binding domain, RBD"/>
    <property type="match status" value="2"/>
</dbReference>
<dbReference type="PROSITE" id="PS50102">
    <property type="entry name" value="RRM"/>
    <property type="match status" value="2"/>
</dbReference>
<proteinExistence type="evidence at protein level"/>
<sequence>MTDVEIKAENGSGDASLEPENLRKIFVGGLTSNTTDDLMREFYSQFGEITDIIVMRDPTTKRSRGFGFVTFSGKTEVDAAMKQRPHIIDGKTVDPKRAVPRDDKNRSESNVSTKRLYVSGVREDHTEDMLTEYFTKYGTVTKSEIILDKATQKPRGFGFVTFDDHDSVDQCVLQKSHMVNGHRCDVRKGLSKDEMSKAQMNRDRETRGGRSRDGQRGGYNGGGGGGGGWGGPAQRGGPGAYGGPGGGGQGGYGGDYGGGWGQQGGGGQGGWGGPQQQQGGGGWGQQGGGGQGGWGGPQQQQQGGWGGPQQGGGGGGWGGQGQQQGGWGGQSGAQQWAHAQGGNRNY</sequence>
<feature type="chain" id="PRO_0000081833" description="Heterogeneous nuclear ribonucleoprotein A1">
    <location>
        <begin position="1"/>
        <end position="346"/>
    </location>
</feature>
<feature type="domain" description="RRM 1" evidence="1">
    <location>
        <begin position="23"/>
        <end position="123"/>
    </location>
</feature>
<feature type="domain" description="RRM 2" evidence="1">
    <location>
        <begin position="114"/>
        <end position="191"/>
    </location>
</feature>
<feature type="region of interest" description="Disordered" evidence="2">
    <location>
        <begin position="92"/>
        <end position="111"/>
    </location>
</feature>
<feature type="region of interest" description="Disordered" evidence="2">
    <location>
        <begin position="189"/>
        <end position="346"/>
    </location>
</feature>
<feature type="compositionally biased region" description="Basic and acidic residues" evidence="2">
    <location>
        <begin position="92"/>
        <end position="107"/>
    </location>
</feature>
<feature type="compositionally biased region" description="Basic and acidic residues" evidence="2">
    <location>
        <begin position="189"/>
        <end position="215"/>
    </location>
</feature>
<feature type="compositionally biased region" description="Gly residues" evidence="2">
    <location>
        <begin position="216"/>
        <end position="296"/>
    </location>
</feature>
<feature type="compositionally biased region" description="Gly residues" evidence="2">
    <location>
        <begin position="303"/>
        <end position="331"/>
    </location>
</feature>
<feature type="compositionally biased region" description="Low complexity" evidence="2">
    <location>
        <begin position="332"/>
        <end position="346"/>
    </location>
</feature>
<feature type="splice variant" id="VSP_051843" description="In isoform b and isoform c." evidence="6">
    <location>
        <begin position="1"/>
        <end position="38"/>
    </location>
</feature>
<feature type="splice variant" id="VSP_051844" description="In isoform b and isoform d." evidence="6">
    <original>D</original>
    <variation>GN</variation>
    <location>
        <position position="255"/>
    </location>
</feature>
<reference evidence="6 7" key="1">
    <citation type="journal article" date="1992" name="Nucleic Acids Res.">
        <title>cDNA cloning of a novel heterogeneous nuclear ribonucleoprotein gene homologue in Caenorhabditis elegans using hamster prion protein cDNA as a hybridisation probe.</title>
        <authorList>
            <person name="Iwasaki M."/>
            <person name="Okumura K."/>
            <person name="Kondo Y."/>
            <person name="Igarashi H."/>
            <person name="Tanaka T."/>
        </authorList>
    </citation>
    <scope>NUCLEOTIDE SEQUENCE [MRNA] (ISOFORM A)</scope>
    <source>
        <strain evidence="7">Bristol N2</strain>
    </source>
</reference>
<reference key="2">
    <citation type="journal article" date="1998" name="Science">
        <title>Genome sequence of the nematode C. elegans: a platform for investigating biology.</title>
        <authorList>
            <consortium name="The C. elegans sequencing consortium"/>
        </authorList>
    </citation>
    <scope>NUCLEOTIDE SEQUENCE [LARGE SCALE GENOMIC DNA]</scope>
    <scope>ALTERNATIVE SPLICING</scope>
    <source>
        <strain>Bristol N2</strain>
    </source>
</reference>
<reference evidence="6" key="3">
    <citation type="submission" date="2005-09" db="UniProtKB">
        <authorList>
            <person name="Bienvenut W.V."/>
        </authorList>
    </citation>
    <scope>PROTEIN SEQUENCE OF 8-61; 65-91; 116-136; 143-149; 156-175; 189-197 AND 217-235 (ISOFORM A)</scope>
    <scope>IDENTIFICATION BY MASS SPECTROMETRY</scope>
</reference>
<reference key="4">
    <citation type="journal article" date="2004" name="Nat. Genet.">
        <title>Long lifespan in worms with long telomeric DNA.</title>
        <authorList>
            <person name="Joeng K.S."/>
            <person name="Song E.J."/>
            <person name="Lee K.-J."/>
            <person name="Lee J."/>
        </authorList>
    </citation>
    <scope>FUNCTION</scope>
    <scope>TELOMERE-BINDING</scope>
</reference>
<accession>Q22037</accession>
<accession>Q336L3</accession>
<accession>Q336L4</accession>
<accession>Q95X69</accession>
<name>ROA1_CAEEL</name>
<comment type="function">
    <text evidence="4">This protein is a component of ribonucleosomes. Overexpression gradually increases telomere length, leading to increase lifespan.</text>
</comment>
<comment type="subcellular location">
    <subcellularLocation>
        <location>Nucleus</location>
    </subcellularLocation>
    <subcellularLocation>
        <location>Chromosome</location>
        <location>Telomere</location>
    </subcellularLocation>
    <text>Binds to telomeres.</text>
</comment>
<comment type="alternative products">
    <event type="alternative splicing"/>
    <isoform>
        <id>Q22037-1</id>
        <name evidence="3">a</name>
        <sequence type="displayed"/>
    </isoform>
    <isoform>
        <id>Q22037-2</id>
        <name evidence="5">b</name>
        <sequence type="described" ref="VSP_051843 VSP_051844"/>
    </isoform>
    <isoform>
        <id>Q22037-3</id>
        <name>c</name>
        <sequence type="described" ref="VSP_051843"/>
    </isoform>
    <isoform>
        <id>Q22037-4</id>
        <name>d</name>
        <sequence type="described" ref="VSP_051844"/>
    </isoform>
</comment>
<organism>
    <name type="scientific">Caenorhabditis elegans</name>
    <dbReference type="NCBI Taxonomy" id="6239"/>
    <lineage>
        <taxon>Eukaryota</taxon>
        <taxon>Metazoa</taxon>
        <taxon>Ecdysozoa</taxon>
        <taxon>Nematoda</taxon>
        <taxon>Chromadorea</taxon>
        <taxon>Rhabditida</taxon>
        <taxon>Rhabditina</taxon>
        <taxon>Rhabditomorpha</taxon>
        <taxon>Rhabditoidea</taxon>
        <taxon>Rhabditidae</taxon>
        <taxon>Peloderinae</taxon>
        <taxon>Caenorhabditis</taxon>
    </lineage>
</organism>
<protein>
    <recommendedName>
        <fullName>Heterogeneous nuclear ribonucleoprotein A1</fullName>
        <shortName>hnRNP A1</shortName>
    </recommendedName>
</protein>
<keyword id="KW-0025">Alternative splicing</keyword>
<keyword id="KW-0158">Chromosome</keyword>
<keyword id="KW-0903">Direct protein sequencing</keyword>
<keyword id="KW-0539">Nucleus</keyword>
<keyword id="KW-1185">Reference proteome</keyword>
<keyword id="KW-0677">Repeat</keyword>
<keyword id="KW-0687">Ribonucleoprotein</keyword>
<keyword id="KW-0694">RNA-binding</keyword>
<keyword id="KW-0779">Telomere</keyword>
<gene>
    <name evidence="8" type="primary">hrpa-1</name>
    <name evidence="8" type="synonym">hrp-1</name>
    <name evidence="7" type="synonym">rbp-1</name>
    <name type="ORF">F42A6.7</name>
</gene>